<dbReference type="EC" id="3.5.3.8" evidence="1"/>
<dbReference type="EMBL" id="CP000627">
    <property type="protein sequence ID" value="ABQ19896.1"/>
    <property type="molecule type" value="Genomic_DNA"/>
</dbReference>
<dbReference type="EMBL" id="CP001235">
    <property type="protein sequence ID" value="ACP09331.1"/>
    <property type="molecule type" value="Genomic_DNA"/>
</dbReference>
<dbReference type="RefSeq" id="WP_001069038.1">
    <property type="nucleotide sequence ID" value="NZ_JAACZH010000002.1"/>
</dbReference>
<dbReference type="SMR" id="A5F1X7"/>
<dbReference type="KEGG" id="vco:VC0395_A0824"/>
<dbReference type="KEGG" id="vcr:VC395_1323"/>
<dbReference type="PATRIC" id="fig|345073.21.peg.1287"/>
<dbReference type="eggNOG" id="COG0010">
    <property type="taxonomic scope" value="Bacteria"/>
</dbReference>
<dbReference type="HOGENOM" id="CLU_039478_2_0_6"/>
<dbReference type="OrthoDB" id="9789727at2"/>
<dbReference type="UniPathway" id="UPA00379">
    <property type="reaction ID" value="UER00552"/>
</dbReference>
<dbReference type="Proteomes" id="UP000000249">
    <property type="component" value="Chromosome 2"/>
</dbReference>
<dbReference type="GO" id="GO:0008783">
    <property type="term" value="F:agmatinase activity"/>
    <property type="evidence" value="ECO:0007669"/>
    <property type="project" value="TreeGrafter"/>
</dbReference>
<dbReference type="GO" id="GO:0050415">
    <property type="term" value="F:formimidoylglutamase activity"/>
    <property type="evidence" value="ECO:0007669"/>
    <property type="project" value="UniProtKB-UniRule"/>
</dbReference>
<dbReference type="GO" id="GO:0030145">
    <property type="term" value="F:manganese ion binding"/>
    <property type="evidence" value="ECO:0007669"/>
    <property type="project" value="UniProtKB-UniRule"/>
</dbReference>
<dbReference type="GO" id="GO:0019556">
    <property type="term" value="P:L-histidine catabolic process to glutamate and formamide"/>
    <property type="evidence" value="ECO:0007669"/>
    <property type="project" value="UniProtKB-UniPathway"/>
</dbReference>
<dbReference type="GO" id="GO:0019557">
    <property type="term" value="P:L-histidine catabolic process to glutamate and formate"/>
    <property type="evidence" value="ECO:0007669"/>
    <property type="project" value="UniProtKB-UniPathway"/>
</dbReference>
<dbReference type="GO" id="GO:0033389">
    <property type="term" value="P:putrescine biosynthetic process from arginine, via agmatine"/>
    <property type="evidence" value="ECO:0007669"/>
    <property type="project" value="TreeGrafter"/>
</dbReference>
<dbReference type="CDD" id="cd09015">
    <property type="entry name" value="Ureohydrolase"/>
    <property type="match status" value="1"/>
</dbReference>
<dbReference type="FunFam" id="3.40.800.10:FF:000010">
    <property type="entry name" value="Formimidoylglutamase"/>
    <property type="match status" value="1"/>
</dbReference>
<dbReference type="Gene3D" id="3.40.800.10">
    <property type="entry name" value="Ureohydrolase domain"/>
    <property type="match status" value="1"/>
</dbReference>
<dbReference type="HAMAP" id="MF_00737">
    <property type="entry name" value="Formimidoylglutam"/>
    <property type="match status" value="1"/>
</dbReference>
<dbReference type="InterPro" id="IPR005923">
    <property type="entry name" value="HutG"/>
</dbReference>
<dbReference type="InterPro" id="IPR006035">
    <property type="entry name" value="Ureohydrolase"/>
</dbReference>
<dbReference type="InterPro" id="IPR023696">
    <property type="entry name" value="Ureohydrolase_dom_sf"/>
</dbReference>
<dbReference type="InterPro" id="IPR020855">
    <property type="entry name" value="Ureohydrolase_Mn_BS"/>
</dbReference>
<dbReference type="NCBIfam" id="TIGR01227">
    <property type="entry name" value="hutG"/>
    <property type="match status" value="1"/>
</dbReference>
<dbReference type="PANTHER" id="PTHR11358">
    <property type="entry name" value="ARGINASE/AGMATINASE"/>
    <property type="match status" value="1"/>
</dbReference>
<dbReference type="PANTHER" id="PTHR11358:SF35">
    <property type="entry name" value="FORMIMIDOYLGLUTAMASE"/>
    <property type="match status" value="1"/>
</dbReference>
<dbReference type="Pfam" id="PF00491">
    <property type="entry name" value="Arginase"/>
    <property type="match status" value="1"/>
</dbReference>
<dbReference type="PIRSF" id="PIRSF036979">
    <property type="entry name" value="Arginase"/>
    <property type="match status" value="1"/>
</dbReference>
<dbReference type="PRINTS" id="PR00116">
    <property type="entry name" value="ARGINASE"/>
</dbReference>
<dbReference type="SUPFAM" id="SSF52768">
    <property type="entry name" value="Arginase/deacetylase"/>
    <property type="match status" value="1"/>
</dbReference>
<dbReference type="PROSITE" id="PS01053">
    <property type="entry name" value="ARGINASE_1"/>
    <property type="match status" value="1"/>
</dbReference>
<dbReference type="PROSITE" id="PS51409">
    <property type="entry name" value="ARGINASE_2"/>
    <property type="match status" value="1"/>
</dbReference>
<comment type="function">
    <text evidence="1">Catalyzes the conversion of N-formimidoyl-L-glutamate to L-glutamate and formamide.</text>
</comment>
<comment type="catalytic activity">
    <reaction evidence="1">
        <text>N-formimidoyl-L-glutamate + H2O = formamide + L-glutamate</text>
        <dbReference type="Rhea" id="RHEA:22492"/>
        <dbReference type="ChEBI" id="CHEBI:15377"/>
        <dbReference type="ChEBI" id="CHEBI:16397"/>
        <dbReference type="ChEBI" id="CHEBI:29985"/>
        <dbReference type="ChEBI" id="CHEBI:58928"/>
        <dbReference type="EC" id="3.5.3.8"/>
    </reaction>
</comment>
<comment type="cofactor">
    <cofactor evidence="1">
        <name>Mn(2+)</name>
        <dbReference type="ChEBI" id="CHEBI:29035"/>
    </cofactor>
    <text evidence="1">Binds 2 manganese ions per subunit.</text>
</comment>
<comment type="pathway">
    <text evidence="1">Amino-acid degradation; L-histidine degradation into L-glutamate; L-glutamate from N-formimidoyl-L-glutamate (hydrolase route): step 1/1.</text>
</comment>
<comment type="similarity">
    <text evidence="1">Belongs to the arginase family.</text>
</comment>
<name>HUTG_VIBC3</name>
<reference key="1">
    <citation type="submission" date="2007-03" db="EMBL/GenBank/DDBJ databases">
        <authorList>
            <person name="Heidelberg J."/>
        </authorList>
    </citation>
    <scope>NUCLEOTIDE SEQUENCE [LARGE SCALE GENOMIC DNA]</scope>
    <source>
        <strain>ATCC 39541 / Classical Ogawa 395 / O395</strain>
    </source>
</reference>
<reference key="2">
    <citation type="journal article" date="2008" name="PLoS ONE">
        <title>A recalibrated molecular clock and independent origins for the cholera pandemic clones.</title>
        <authorList>
            <person name="Feng L."/>
            <person name="Reeves P.R."/>
            <person name="Lan R."/>
            <person name="Ren Y."/>
            <person name="Gao C."/>
            <person name="Zhou Z."/>
            <person name="Ren Y."/>
            <person name="Cheng J."/>
            <person name="Wang W."/>
            <person name="Wang J."/>
            <person name="Qian W."/>
            <person name="Li D."/>
            <person name="Wang L."/>
        </authorList>
    </citation>
    <scope>NUCLEOTIDE SEQUENCE [LARGE SCALE GENOMIC DNA]</scope>
    <source>
        <strain>ATCC 39541 / Classical Ogawa 395 / O395</strain>
    </source>
</reference>
<proteinExistence type="inferred from homology"/>
<gene>
    <name evidence="1" type="primary">hutG</name>
    <name type="ordered locus">VC0395_A0824</name>
    <name type="ordered locus">VC395_1323</name>
</gene>
<organism>
    <name type="scientific">Vibrio cholerae serotype O1 (strain ATCC 39541 / Classical Ogawa 395 / O395)</name>
    <dbReference type="NCBI Taxonomy" id="345073"/>
    <lineage>
        <taxon>Bacteria</taxon>
        <taxon>Pseudomonadati</taxon>
        <taxon>Pseudomonadota</taxon>
        <taxon>Gammaproteobacteria</taxon>
        <taxon>Vibrionales</taxon>
        <taxon>Vibrionaceae</taxon>
        <taxon>Vibrio</taxon>
    </lineage>
</organism>
<sequence>MNPNFTTEHTWQGRHDPEDGQAGRRVHHIACPIQVGELANQEPGVALIGFECDAGVERNKGRTGAKHAPSLIKQALANLAWHHPIPIYDLGNIRCEGDELEQAQQECAQVIQQALPHARAIVLGGGHEIAWATFQGLAQHFLATGVKQPRIGIINFDAHFDLRTFESELAPVRPSSGTPFNQIHHFCQQQGWDFHYACLGVSRASNTPALFERADKLGVWYVEDKAFSPLSLKDHLTQLQHFIDDCDYLYLTIDLDVFPAASAPGVSAPAARGVSLEALAPYFDRILHYKNKLMIADIAEYNPSFDIDQHTARLAARLCWDIANAMAEQVQSIRHP</sequence>
<keyword id="KW-0369">Histidine metabolism</keyword>
<keyword id="KW-0378">Hydrolase</keyword>
<keyword id="KW-0464">Manganese</keyword>
<keyword id="KW-0479">Metal-binding</keyword>
<accession>A5F1X7</accession>
<accession>C3LZW5</accession>
<protein>
    <recommendedName>
        <fullName evidence="1">Formimidoylglutamase</fullName>
        <ecNumber evidence="1">3.5.3.8</ecNumber>
    </recommendedName>
    <alternativeName>
        <fullName evidence="1">Formiminoglutamase</fullName>
    </alternativeName>
    <alternativeName>
        <fullName evidence="1">Formiminoglutamate hydrolase</fullName>
    </alternativeName>
</protein>
<feature type="chain" id="PRO_1000072807" description="Formimidoylglutamase">
    <location>
        <begin position="1"/>
        <end position="336"/>
    </location>
</feature>
<feature type="region of interest" description="Disordered" evidence="2">
    <location>
        <begin position="1"/>
        <end position="22"/>
    </location>
</feature>
<feature type="compositionally biased region" description="Polar residues" evidence="2">
    <location>
        <begin position="1"/>
        <end position="10"/>
    </location>
</feature>
<feature type="compositionally biased region" description="Basic and acidic residues" evidence="2">
    <location>
        <begin position="11"/>
        <end position="22"/>
    </location>
</feature>
<feature type="binding site" evidence="1">
    <location>
        <position position="127"/>
    </location>
    <ligand>
        <name>Mn(2+)</name>
        <dbReference type="ChEBI" id="CHEBI:29035"/>
        <label>1</label>
    </ligand>
</feature>
<feature type="binding site" evidence="1">
    <location>
        <position position="157"/>
    </location>
    <ligand>
        <name>Mn(2+)</name>
        <dbReference type="ChEBI" id="CHEBI:29035"/>
        <label>1</label>
    </ligand>
</feature>
<feature type="binding site" evidence="1">
    <location>
        <position position="157"/>
    </location>
    <ligand>
        <name>Mn(2+)</name>
        <dbReference type="ChEBI" id="CHEBI:29035"/>
        <label>2</label>
    </ligand>
</feature>
<feature type="binding site" evidence="1">
    <location>
        <position position="159"/>
    </location>
    <ligand>
        <name>Mn(2+)</name>
        <dbReference type="ChEBI" id="CHEBI:29035"/>
        <label>2</label>
    </ligand>
</feature>
<feature type="binding site" evidence="1">
    <location>
        <position position="161"/>
    </location>
    <ligand>
        <name>Mn(2+)</name>
        <dbReference type="ChEBI" id="CHEBI:29035"/>
        <label>1</label>
    </ligand>
</feature>
<feature type="binding site" evidence="1">
    <location>
        <position position="254"/>
    </location>
    <ligand>
        <name>Mn(2+)</name>
        <dbReference type="ChEBI" id="CHEBI:29035"/>
        <label>1</label>
    </ligand>
</feature>
<feature type="binding site" evidence="1">
    <location>
        <position position="254"/>
    </location>
    <ligand>
        <name>Mn(2+)</name>
        <dbReference type="ChEBI" id="CHEBI:29035"/>
        <label>2</label>
    </ligand>
</feature>
<feature type="binding site" evidence="1">
    <location>
        <position position="256"/>
    </location>
    <ligand>
        <name>Mn(2+)</name>
        <dbReference type="ChEBI" id="CHEBI:29035"/>
        <label>2</label>
    </ligand>
</feature>
<evidence type="ECO:0000255" key="1">
    <source>
        <dbReference type="HAMAP-Rule" id="MF_00737"/>
    </source>
</evidence>
<evidence type="ECO:0000256" key="2">
    <source>
        <dbReference type="SAM" id="MobiDB-lite"/>
    </source>
</evidence>